<gene>
    <name type="primary">Atp6v1h</name>
</gene>
<organism>
    <name type="scientific">Mus musculus</name>
    <name type="common">Mouse</name>
    <dbReference type="NCBI Taxonomy" id="10090"/>
    <lineage>
        <taxon>Eukaryota</taxon>
        <taxon>Metazoa</taxon>
        <taxon>Chordata</taxon>
        <taxon>Craniata</taxon>
        <taxon>Vertebrata</taxon>
        <taxon>Euteleostomi</taxon>
        <taxon>Mammalia</taxon>
        <taxon>Eutheria</taxon>
        <taxon>Euarchontoglires</taxon>
        <taxon>Glires</taxon>
        <taxon>Rodentia</taxon>
        <taxon>Myomorpha</taxon>
        <taxon>Muroidea</taxon>
        <taxon>Muridae</taxon>
        <taxon>Murinae</taxon>
        <taxon>Mus</taxon>
        <taxon>Mus</taxon>
    </lineage>
</organism>
<evidence type="ECO:0000250" key="1">
    <source>
        <dbReference type="UniProtKB" id="O46563"/>
    </source>
</evidence>
<evidence type="ECO:0000250" key="2">
    <source>
        <dbReference type="UniProtKB" id="P41807"/>
    </source>
</evidence>
<evidence type="ECO:0000250" key="3">
    <source>
        <dbReference type="UniProtKB" id="Q9UI12"/>
    </source>
</evidence>
<evidence type="ECO:0000305" key="4"/>
<evidence type="ECO:0007744" key="5">
    <source>
    </source>
</evidence>
<accession>Q8BVE3</accession>
<accession>Q921X8</accession>
<protein>
    <recommendedName>
        <fullName>V-type proton ATPase subunit H</fullName>
        <shortName>V-ATPase subunit H</shortName>
    </recommendedName>
    <alternativeName>
        <fullName>Vacuolar proton pump subunit H</fullName>
    </alternativeName>
</protein>
<reference key="1">
    <citation type="journal article" date="2005" name="Science">
        <title>The transcriptional landscape of the mammalian genome.</title>
        <authorList>
            <person name="Carninci P."/>
            <person name="Kasukawa T."/>
            <person name="Katayama S."/>
            <person name="Gough J."/>
            <person name="Frith M.C."/>
            <person name="Maeda N."/>
            <person name="Oyama R."/>
            <person name="Ravasi T."/>
            <person name="Lenhard B."/>
            <person name="Wells C."/>
            <person name="Kodzius R."/>
            <person name="Shimokawa K."/>
            <person name="Bajic V.B."/>
            <person name="Brenner S.E."/>
            <person name="Batalov S."/>
            <person name="Forrest A.R."/>
            <person name="Zavolan M."/>
            <person name="Davis M.J."/>
            <person name="Wilming L.G."/>
            <person name="Aidinis V."/>
            <person name="Allen J.E."/>
            <person name="Ambesi-Impiombato A."/>
            <person name="Apweiler R."/>
            <person name="Aturaliya R.N."/>
            <person name="Bailey T.L."/>
            <person name="Bansal M."/>
            <person name="Baxter L."/>
            <person name="Beisel K.W."/>
            <person name="Bersano T."/>
            <person name="Bono H."/>
            <person name="Chalk A.M."/>
            <person name="Chiu K.P."/>
            <person name="Choudhary V."/>
            <person name="Christoffels A."/>
            <person name="Clutterbuck D.R."/>
            <person name="Crowe M.L."/>
            <person name="Dalla E."/>
            <person name="Dalrymple B.P."/>
            <person name="de Bono B."/>
            <person name="Della Gatta G."/>
            <person name="di Bernardo D."/>
            <person name="Down T."/>
            <person name="Engstrom P."/>
            <person name="Fagiolini M."/>
            <person name="Faulkner G."/>
            <person name="Fletcher C.F."/>
            <person name="Fukushima T."/>
            <person name="Furuno M."/>
            <person name="Futaki S."/>
            <person name="Gariboldi M."/>
            <person name="Georgii-Hemming P."/>
            <person name="Gingeras T.R."/>
            <person name="Gojobori T."/>
            <person name="Green R.E."/>
            <person name="Gustincich S."/>
            <person name="Harbers M."/>
            <person name="Hayashi Y."/>
            <person name="Hensch T.K."/>
            <person name="Hirokawa N."/>
            <person name="Hill D."/>
            <person name="Huminiecki L."/>
            <person name="Iacono M."/>
            <person name="Ikeo K."/>
            <person name="Iwama A."/>
            <person name="Ishikawa T."/>
            <person name="Jakt M."/>
            <person name="Kanapin A."/>
            <person name="Katoh M."/>
            <person name="Kawasawa Y."/>
            <person name="Kelso J."/>
            <person name="Kitamura H."/>
            <person name="Kitano H."/>
            <person name="Kollias G."/>
            <person name="Krishnan S.P."/>
            <person name="Kruger A."/>
            <person name="Kummerfeld S.K."/>
            <person name="Kurochkin I.V."/>
            <person name="Lareau L.F."/>
            <person name="Lazarevic D."/>
            <person name="Lipovich L."/>
            <person name="Liu J."/>
            <person name="Liuni S."/>
            <person name="McWilliam S."/>
            <person name="Madan Babu M."/>
            <person name="Madera M."/>
            <person name="Marchionni L."/>
            <person name="Matsuda H."/>
            <person name="Matsuzawa S."/>
            <person name="Miki H."/>
            <person name="Mignone F."/>
            <person name="Miyake S."/>
            <person name="Morris K."/>
            <person name="Mottagui-Tabar S."/>
            <person name="Mulder N."/>
            <person name="Nakano N."/>
            <person name="Nakauchi H."/>
            <person name="Ng P."/>
            <person name="Nilsson R."/>
            <person name="Nishiguchi S."/>
            <person name="Nishikawa S."/>
            <person name="Nori F."/>
            <person name="Ohara O."/>
            <person name="Okazaki Y."/>
            <person name="Orlando V."/>
            <person name="Pang K.C."/>
            <person name="Pavan W.J."/>
            <person name="Pavesi G."/>
            <person name="Pesole G."/>
            <person name="Petrovsky N."/>
            <person name="Piazza S."/>
            <person name="Reed J."/>
            <person name="Reid J.F."/>
            <person name="Ring B.Z."/>
            <person name="Ringwald M."/>
            <person name="Rost B."/>
            <person name="Ruan Y."/>
            <person name="Salzberg S.L."/>
            <person name="Sandelin A."/>
            <person name="Schneider C."/>
            <person name="Schoenbach C."/>
            <person name="Sekiguchi K."/>
            <person name="Semple C.A."/>
            <person name="Seno S."/>
            <person name="Sessa L."/>
            <person name="Sheng Y."/>
            <person name="Shibata Y."/>
            <person name="Shimada H."/>
            <person name="Shimada K."/>
            <person name="Silva D."/>
            <person name="Sinclair B."/>
            <person name="Sperling S."/>
            <person name="Stupka E."/>
            <person name="Sugiura K."/>
            <person name="Sultana R."/>
            <person name="Takenaka Y."/>
            <person name="Taki K."/>
            <person name="Tammoja K."/>
            <person name="Tan S.L."/>
            <person name="Tang S."/>
            <person name="Taylor M.S."/>
            <person name="Tegner J."/>
            <person name="Teichmann S.A."/>
            <person name="Ueda H.R."/>
            <person name="van Nimwegen E."/>
            <person name="Verardo R."/>
            <person name="Wei C.L."/>
            <person name="Yagi K."/>
            <person name="Yamanishi H."/>
            <person name="Zabarovsky E."/>
            <person name="Zhu S."/>
            <person name="Zimmer A."/>
            <person name="Hide W."/>
            <person name="Bult C."/>
            <person name="Grimmond S.M."/>
            <person name="Teasdale R.D."/>
            <person name="Liu E.T."/>
            <person name="Brusic V."/>
            <person name="Quackenbush J."/>
            <person name="Wahlestedt C."/>
            <person name="Mattick J.S."/>
            <person name="Hume D.A."/>
            <person name="Kai C."/>
            <person name="Sasaki D."/>
            <person name="Tomaru Y."/>
            <person name="Fukuda S."/>
            <person name="Kanamori-Katayama M."/>
            <person name="Suzuki M."/>
            <person name="Aoki J."/>
            <person name="Arakawa T."/>
            <person name="Iida J."/>
            <person name="Imamura K."/>
            <person name="Itoh M."/>
            <person name="Kato T."/>
            <person name="Kawaji H."/>
            <person name="Kawagashira N."/>
            <person name="Kawashima T."/>
            <person name="Kojima M."/>
            <person name="Kondo S."/>
            <person name="Konno H."/>
            <person name="Nakano K."/>
            <person name="Ninomiya N."/>
            <person name="Nishio T."/>
            <person name="Okada M."/>
            <person name="Plessy C."/>
            <person name="Shibata K."/>
            <person name="Shiraki T."/>
            <person name="Suzuki S."/>
            <person name="Tagami M."/>
            <person name="Waki K."/>
            <person name="Watahiki A."/>
            <person name="Okamura-Oho Y."/>
            <person name="Suzuki H."/>
            <person name="Kawai J."/>
            <person name="Hayashizaki Y."/>
        </authorList>
    </citation>
    <scope>NUCLEOTIDE SEQUENCE [LARGE SCALE MRNA]</scope>
    <source>
        <strain>C57BL/6J</strain>
        <tissue>Testis</tissue>
    </source>
</reference>
<reference key="2">
    <citation type="journal article" date="2004" name="Genome Res.">
        <title>The status, quality, and expansion of the NIH full-length cDNA project: the Mammalian Gene Collection (MGC).</title>
        <authorList>
            <consortium name="The MGC Project Team"/>
        </authorList>
    </citation>
    <scope>NUCLEOTIDE SEQUENCE [LARGE SCALE MRNA]</scope>
    <source>
        <strain>FVB/N</strain>
        <tissue>Mammary tumor</tissue>
    </source>
</reference>
<reference key="3">
    <citation type="submission" date="2007-04" db="UniProtKB">
        <authorList>
            <person name="Lubec G."/>
            <person name="Kang S.U."/>
        </authorList>
    </citation>
    <scope>PROTEIN SEQUENCE OF 76-86; 108-116; 263-278; 284-290; 342-360; 397-419 AND 450-458</scope>
    <scope>IDENTIFICATION BY MASS SPECTROMETRY</scope>
    <source>
        <strain>C57BL/6J</strain>
        <tissue>Brain</tissue>
    </source>
</reference>
<reference key="4">
    <citation type="journal article" date="2010" name="Cell">
        <title>A tissue-specific atlas of mouse protein phosphorylation and expression.</title>
        <authorList>
            <person name="Huttlin E.L."/>
            <person name="Jedrychowski M.P."/>
            <person name="Elias J.E."/>
            <person name="Goswami T."/>
            <person name="Rad R."/>
            <person name="Beausoleil S.A."/>
            <person name="Villen J."/>
            <person name="Haas W."/>
            <person name="Sowa M.E."/>
            <person name="Gygi S.P."/>
        </authorList>
    </citation>
    <scope>PHOSPHORYLATION [LARGE SCALE ANALYSIS] AT SER-59</scope>
    <scope>IDENTIFICATION BY MASS SPECTROMETRY [LARGE SCALE ANALYSIS]</scope>
    <source>
        <tissue>Brain</tissue>
        <tissue>Brown adipose tissue</tissue>
        <tissue>Heart</tissue>
        <tissue>Kidney</tissue>
        <tissue>Liver</tissue>
        <tissue>Lung</tissue>
        <tissue>Pancreas</tissue>
        <tissue>Spleen</tissue>
        <tissue>Testis</tissue>
    </source>
</reference>
<sequence length="483" mass="55855">MTKMDIRGAVDAAVPTNIIAAKAAEVRANKVNWQSYLQGQMISAEDCEFIQRFEMKRSSEDKQEMLQTEGSQCAKTFINLMTHISKEQTVQYILTMVDDMLQENHQRVSIFFDYAKRSKSTAWPYFLPMLNRQDPFTVHMAARIIAKLAAWGKELMEGSDLNYYFNWIKTQLSSQKLRGSGVAVETGTISSSDSSQYVQCVAGCLQLMLRVNEYRFAWVEADGVNCIMGVLSNKCGFQLQYQMIFSIWLLAFSPQMCEHLRRYNIIPVLSDILQESVKEKVTRIILAAFRNFLEKSTERETRQEYALAMIQCKVLKQLENLEQQKYDDEDISEDIKFLLEKLGESVQDLSSFDEYSSELKSGRLEWSPVHKSEKFWRENAVRLNEKNYELLKILTKLLEVSDDPQVLAVAAHDVGEYVRHYPRGKRVIEQLGGKQLVMNHMHHEDQQVRYNALLAVQKLMVHNWEYLGKQLQSEQPQTAAARS</sequence>
<feature type="chain" id="PRO_0000124194" description="V-type proton ATPase subunit H">
    <location>
        <begin position="1"/>
        <end position="483"/>
    </location>
</feature>
<feature type="modified residue" description="Phosphoserine" evidence="5">
    <location>
        <position position="59"/>
    </location>
</feature>
<feature type="modified residue" description="Phosphoserine" evidence="3">
    <location>
        <position position="483"/>
    </location>
</feature>
<feature type="sequence conflict" description="In Ref. 2; AAH09154." evidence="4" ref="2">
    <original>I</original>
    <variation>V</variation>
    <location>
        <position position="247"/>
    </location>
</feature>
<comment type="function">
    <text evidence="1 2 3">Subunit of the V1 complex of vacuolar(H+)-ATPase (V-ATPase), a multisubunit enzyme composed of a peripheral complex (V1) that hydrolyzes ATP and a membrane integral complex (V0) that translocates protons (By similarity). V-ATPase is responsible for acidifying and maintaining the pH of intracellular compartments and in some cell types, is targeted to the plasma membrane, where it is responsible for acidifying the extracellular environment (By similarity). Subunit H is essential for V-ATPase activity, but not for the assembly of the complex (By similarity). Involved in the endocytosis mediated by clathrin-coated pits, required for the formation of endosomes (By similarity).</text>
</comment>
<comment type="subunit">
    <text evidence="3">V-ATPase is a heteromultimeric enzyme made up of two complexes: the ATP-hydrolytic V1 complex and the proton translocation V0 complex (By similarity). The V1 complex consists of three catalytic AB heterodimers that form a heterohexamer, three peripheral stalks each consisting of EG heterodimers, one central rotor including subunits D and F, and the regulatory subunits C and H (By similarity). The proton translocation complex V0 consists of the proton transport subunit a, a ring of proteolipid subunits c9c'', rotary subunit d, subunits e and f, and the accessory subunits ATP6AP1/Ac45 and ATP6AP2/PRR (By similarity). Interacts with AP2M1 (By similarity).</text>
</comment>
<comment type="subcellular location">
    <subcellularLocation>
        <location evidence="1">Cytoplasmic vesicle</location>
        <location evidence="1">Clathrin-coated vesicle membrane</location>
        <topology evidence="4">Peripheral membrane protein</topology>
    </subcellularLocation>
</comment>
<comment type="similarity">
    <text evidence="4">Belongs to the V-ATPase H subunit family.</text>
</comment>
<name>VATH_MOUSE</name>
<dbReference type="EMBL" id="AK078767">
    <property type="protein sequence ID" value="BAC37382.1"/>
    <property type="molecule type" value="mRNA"/>
</dbReference>
<dbReference type="EMBL" id="BC009154">
    <property type="protein sequence ID" value="AAH09154.1"/>
    <property type="molecule type" value="mRNA"/>
</dbReference>
<dbReference type="CCDS" id="CCDS14808.1"/>
<dbReference type="RefSeq" id="NP_001297371.1">
    <property type="nucleotide sequence ID" value="NM_001310442.1"/>
</dbReference>
<dbReference type="RefSeq" id="NP_598587.2">
    <property type="nucleotide sequence ID" value="NM_133826.5"/>
</dbReference>
<dbReference type="RefSeq" id="XP_006495496.1">
    <property type="nucleotide sequence ID" value="XM_006495433.4"/>
</dbReference>
<dbReference type="PDB" id="9BRA">
    <property type="method" value="EM"/>
    <property type="resolution" value="4.30 A"/>
    <property type="chains" value="U=1-483"/>
</dbReference>
<dbReference type="PDB" id="9BRQ">
    <property type="method" value="EM"/>
    <property type="resolution" value="4.30 A"/>
    <property type="chains" value="U=1-483"/>
</dbReference>
<dbReference type="PDB" id="9BRR">
    <property type="method" value="EM"/>
    <property type="resolution" value="4.50 A"/>
    <property type="chains" value="U=1-483"/>
</dbReference>
<dbReference type="PDB" id="9BRS">
    <property type="method" value="EM"/>
    <property type="resolution" value="4.40 A"/>
    <property type="chains" value="U=1-483"/>
</dbReference>
<dbReference type="PDB" id="9BRT">
    <property type="method" value="EM"/>
    <property type="resolution" value="4.30 A"/>
    <property type="chains" value="U=1-483"/>
</dbReference>
<dbReference type="PDB" id="9BRU">
    <property type="method" value="EM"/>
    <property type="resolution" value="4.40 A"/>
    <property type="chains" value="U=1-483"/>
</dbReference>
<dbReference type="PDBsum" id="9BRA"/>
<dbReference type="PDBsum" id="9BRQ"/>
<dbReference type="PDBsum" id="9BRR"/>
<dbReference type="PDBsum" id="9BRS"/>
<dbReference type="PDBsum" id="9BRT"/>
<dbReference type="PDBsum" id="9BRU"/>
<dbReference type="EMDB" id="EMD-44839"/>
<dbReference type="EMDB" id="EMD-44840"/>
<dbReference type="EMDB" id="EMD-44841"/>
<dbReference type="EMDB" id="EMD-44842"/>
<dbReference type="EMDB" id="EMD-44843"/>
<dbReference type="EMDB" id="EMD-44844"/>
<dbReference type="SMR" id="Q8BVE3"/>
<dbReference type="BioGRID" id="224360">
    <property type="interactions" value="19"/>
</dbReference>
<dbReference type="FunCoup" id="Q8BVE3">
    <property type="interactions" value="3225"/>
</dbReference>
<dbReference type="IntAct" id="Q8BVE3">
    <property type="interactions" value="3"/>
</dbReference>
<dbReference type="MINT" id="Q8BVE3"/>
<dbReference type="STRING" id="10090.ENSMUSP00000040756"/>
<dbReference type="TCDB" id="3.A.2.2.6">
    <property type="family name" value="the h+- or na+-translocating f-type, v-type and a-type atpase (f-atpase) superfamily"/>
</dbReference>
<dbReference type="GlyGen" id="Q8BVE3">
    <property type="glycosylation" value="1 site, 1 O-linked glycan (1 site)"/>
</dbReference>
<dbReference type="iPTMnet" id="Q8BVE3"/>
<dbReference type="PhosphoSitePlus" id="Q8BVE3"/>
<dbReference type="SwissPalm" id="Q8BVE3"/>
<dbReference type="jPOST" id="Q8BVE3"/>
<dbReference type="PaxDb" id="10090-ENSMUSP00000040756"/>
<dbReference type="PeptideAtlas" id="Q8BVE3"/>
<dbReference type="ProteomicsDB" id="298273"/>
<dbReference type="Pumba" id="Q8BVE3"/>
<dbReference type="Antibodypedia" id="4026">
    <property type="antibodies" value="152 antibodies from 25 providers"/>
</dbReference>
<dbReference type="DNASU" id="108664"/>
<dbReference type="Ensembl" id="ENSMUST00000044369.13">
    <property type="protein sequence ID" value="ENSMUSP00000040756.8"/>
    <property type="gene ID" value="ENSMUSG00000033793.13"/>
</dbReference>
<dbReference type="GeneID" id="108664"/>
<dbReference type="KEGG" id="mmu:108664"/>
<dbReference type="UCSC" id="uc007afn.1">
    <property type="organism name" value="mouse"/>
</dbReference>
<dbReference type="AGR" id="MGI:1914864"/>
<dbReference type="CTD" id="51606"/>
<dbReference type="MGI" id="MGI:1914864">
    <property type="gene designation" value="Atp6v1h"/>
</dbReference>
<dbReference type="VEuPathDB" id="HostDB:ENSMUSG00000033793"/>
<dbReference type="eggNOG" id="KOG2759">
    <property type="taxonomic scope" value="Eukaryota"/>
</dbReference>
<dbReference type="GeneTree" id="ENSGT00390000003289"/>
<dbReference type="InParanoid" id="Q8BVE3"/>
<dbReference type="OMA" id="HSGHLRW"/>
<dbReference type="OrthoDB" id="10263554at2759"/>
<dbReference type="PhylomeDB" id="Q8BVE3"/>
<dbReference type="TreeFam" id="TF313488"/>
<dbReference type="Reactome" id="R-MMU-1222556">
    <property type="pathway name" value="ROS and RNS production in phagocytes"/>
</dbReference>
<dbReference type="Reactome" id="R-MMU-77387">
    <property type="pathway name" value="Insulin receptor recycling"/>
</dbReference>
<dbReference type="Reactome" id="R-MMU-917977">
    <property type="pathway name" value="Transferrin endocytosis and recycling"/>
</dbReference>
<dbReference type="Reactome" id="R-MMU-9639288">
    <property type="pathway name" value="Amino acids regulate mTORC1"/>
</dbReference>
<dbReference type="Reactome" id="R-MMU-983712">
    <property type="pathway name" value="Ion channel transport"/>
</dbReference>
<dbReference type="BioGRID-ORCS" id="108664">
    <property type="hits" value="22 hits in 80 CRISPR screens"/>
</dbReference>
<dbReference type="CD-CODE" id="CE726F99">
    <property type="entry name" value="Postsynaptic density"/>
</dbReference>
<dbReference type="ChiTaRS" id="Atp6v1h">
    <property type="organism name" value="mouse"/>
</dbReference>
<dbReference type="PRO" id="PR:Q8BVE3"/>
<dbReference type="Proteomes" id="UP000000589">
    <property type="component" value="Chromosome 1"/>
</dbReference>
<dbReference type="RNAct" id="Q8BVE3">
    <property type="molecule type" value="protein"/>
</dbReference>
<dbReference type="Bgee" id="ENSMUSG00000033793">
    <property type="expression patterns" value="Expressed in stroma of bone marrow and 262 other cell types or tissues"/>
</dbReference>
<dbReference type="ExpressionAtlas" id="Q8BVE3">
    <property type="expression patterns" value="baseline and differential"/>
</dbReference>
<dbReference type="GO" id="GO:1904949">
    <property type="term" value="C:ATPase complex"/>
    <property type="evidence" value="ECO:0000266"/>
    <property type="project" value="MGI"/>
</dbReference>
<dbReference type="GO" id="GO:0030665">
    <property type="term" value="C:clathrin-coated vesicle membrane"/>
    <property type="evidence" value="ECO:0007669"/>
    <property type="project" value="UniProtKB-SubCell"/>
</dbReference>
<dbReference type="GO" id="GO:0098793">
    <property type="term" value="C:presynapse"/>
    <property type="evidence" value="ECO:0007669"/>
    <property type="project" value="GOC"/>
</dbReference>
<dbReference type="GO" id="GO:0033176">
    <property type="term" value="C:proton-transporting V-type ATPase complex"/>
    <property type="evidence" value="ECO:0000314"/>
    <property type="project" value="MGI"/>
</dbReference>
<dbReference type="GO" id="GO:0033180">
    <property type="term" value="C:proton-transporting V-type ATPase, V1 domain"/>
    <property type="evidence" value="ECO:0000266"/>
    <property type="project" value="MGI"/>
</dbReference>
<dbReference type="GO" id="GO:0000221">
    <property type="term" value="C:vacuolar proton-transporting V-type ATPase, V1 domain"/>
    <property type="evidence" value="ECO:0000250"/>
    <property type="project" value="UniProtKB"/>
</dbReference>
<dbReference type="GO" id="GO:0046961">
    <property type="term" value="F:proton-transporting ATPase activity, rotational mechanism"/>
    <property type="evidence" value="ECO:0007669"/>
    <property type="project" value="InterPro"/>
</dbReference>
<dbReference type="GO" id="GO:0097401">
    <property type="term" value="P:synaptic vesicle lumen acidification"/>
    <property type="evidence" value="ECO:0000314"/>
    <property type="project" value="SynGO"/>
</dbReference>
<dbReference type="CDD" id="cd00256">
    <property type="entry name" value="VATPase_H"/>
    <property type="match status" value="1"/>
</dbReference>
<dbReference type="FunFam" id="1.25.10.10:FF:000067">
    <property type="entry name" value="V-type proton ATPase subunit H"/>
    <property type="match status" value="1"/>
</dbReference>
<dbReference type="FunFam" id="1.25.40.150:FF:000001">
    <property type="entry name" value="V-type proton ATPase subunit H"/>
    <property type="match status" value="1"/>
</dbReference>
<dbReference type="Gene3D" id="1.25.10.10">
    <property type="entry name" value="Leucine-rich Repeat Variant"/>
    <property type="match status" value="1"/>
</dbReference>
<dbReference type="Gene3D" id="1.25.40.150">
    <property type="entry name" value="V-type ATPase, subunit H, C-terminal domain"/>
    <property type="match status" value="1"/>
</dbReference>
<dbReference type="InterPro" id="IPR011989">
    <property type="entry name" value="ARM-like"/>
</dbReference>
<dbReference type="InterPro" id="IPR016024">
    <property type="entry name" value="ARM-type_fold"/>
</dbReference>
<dbReference type="InterPro" id="IPR004908">
    <property type="entry name" value="ATPase_V1-cplx_hsu"/>
</dbReference>
<dbReference type="InterPro" id="IPR011987">
    <property type="entry name" value="ATPase_V1-cplx_hsu_C"/>
</dbReference>
<dbReference type="InterPro" id="IPR038497">
    <property type="entry name" value="ATPase_V1-cplx_hsu_C_sf"/>
</dbReference>
<dbReference type="PANTHER" id="PTHR10698">
    <property type="entry name" value="V-TYPE PROTON ATPASE SUBUNIT H"/>
    <property type="match status" value="1"/>
</dbReference>
<dbReference type="PANTHER" id="PTHR10698:SF0">
    <property type="entry name" value="V-TYPE PROTON ATPASE SUBUNIT H"/>
    <property type="match status" value="1"/>
</dbReference>
<dbReference type="Pfam" id="PF11698">
    <property type="entry name" value="V-ATPase_H_C"/>
    <property type="match status" value="1"/>
</dbReference>
<dbReference type="Pfam" id="PF03224">
    <property type="entry name" value="V-ATPase_H_N"/>
    <property type="match status" value="1"/>
</dbReference>
<dbReference type="PIRSF" id="PIRSF032184">
    <property type="entry name" value="ATPase_V1_H"/>
    <property type="match status" value="1"/>
</dbReference>
<dbReference type="SUPFAM" id="SSF48371">
    <property type="entry name" value="ARM repeat"/>
    <property type="match status" value="1"/>
</dbReference>
<keyword id="KW-0002">3D-structure</keyword>
<keyword id="KW-0968">Cytoplasmic vesicle</keyword>
<keyword id="KW-0903">Direct protein sequencing</keyword>
<keyword id="KW-0375">Hydrogen ion transport</keyword>
<keyword id="KW-0406">Ion transport</keyword>
<keyword id="KW-0472">Membrane</keyword>
<keyword id="KW-0597">Phosphoprotein</keyword>
<keyword id="KW-1185">Reference proteome</keyword>
<keyword id="KW-0813">Transport</keyword>
<proteinExistence type="evidence at protein level"/>